<dbReference type="EC" id="1.1.1.145" evidence="4 5"/>
<dbReference type="EC" id="1.1.1.270" evidence="4"/>
<dbReference type="EC" id="1.1.1.210" evidence="4"/>
<dbReference type="EC" id="5.3.3.1" evidence="4 5"/>
<dbReference type="EMBL" id="M38178">
    <property type="protein sequence ID" value="AAA63474.1"/>
    <property type="molecule type" value="mRNA"/>
</dbReference>
<dbReference type="EMBL" id="BC086578">
    <property type="protein sequence ID" value="AAH86578.1"/>
    <property type="molecule type" value="mRNA"/>
</dbReference>
<dbReference type="EMBL" id="DQ515797">
    <property type="protein sequence ID" value="ABF70960.1"/>
    <property type="molecule type" value="mRNA"/>
</dbReference>
<dbReference type="PIR" id="A39051">
    <property type="entry name" value="DERTH1"/>
</dbReference>
<dbReference type="RefSeq" id="NP_001007720.3">
    <property type="nucleotide sequence ID" value="NM_001007719.3"/>
</dbReference>
<dbReference type="SMR" id="P22071"/>
<dbReference type="FunCoup" id="P22071">
    <property type="interactions" value="8"/>
</dbReference>
<dbReference type="PhosphoSitePlus" id="P22071"/>
<dbReference type="Ensembl" id="ENSRNOT00000086835.2">
    <property type="protein sequence ID" value="ENSRNOP00000075324.2"/>
    <property type="gene ID" value="ENSRNOG00000070622.1"/>
</dbReference>
<dbReference type="GeneID" id="360348"/>
<dbReference type="KEGG" id="rno:360348"/>
<dbReference type="UCSC" id="RGD:1308676">
    <property type="organism name" value="rat"/>
</dbReference>
<dbReference type="AGR" id="RGD:1308676"/>
<dbReference type="CTD" id="3283"/>
<dbReference type="RGD" id="1308676">
    <property type="gene designation" value="Hsd3b1"/>
</dbReference>
<dbReference type="GeneTree" id="ENSGT00940000155444"/>
<dbReference type="InParanoid" id="P22071"/>
<dbReference type="OMA" id="GGKFYFV"/>
<dbReference type="OrthoDB" id="1925334at2759"/>
<dbReference type="PhylomeDB" id="P22071"/>
<dbReference type="BRENDA" id="1.1.1.145">
    <property type="organism ID" value="5301"/>
</dbReference>
<dbReference type="BRENDA" id="5.3.3.1">
    <property type="organism ID" value="5301"/>
</dbReference>
<dbReference type="Reactome" id="R-RNO-193048">
    <property type="pathway name" value="Androgen biosynthesis"/>
</dbReference>
<dbReference type="Reactome" id="R-RNO-193993">
    <property type="pathway name" value="Mineralocorticoid biosynthesis"/>
</dbReference>
<dbReference type="Reactome" id="R-RNO-194002">
    <property type="pathway name" value="Glucocorticoid biosynthesis"/>
</dbReference>
<dbReference type="PRO" id="PR:P22071"/>
<dbReference type="Proteomes" id="UP000002494">
    <property type="component" value="Chromosome 2"/>
</dbReference>
<dbReference type="GO" id="GO:0005737">
    <property type="term" value="C:cytoplasm"/>
    <property type="evidence" value="ECO:0000318"/>
    <property type="project" value="GO_Central"/>
</dbReference>
<dbReference type="GO" id="GO:0005789">
    <property type="term" value="C:endoplasmic reticulum membrane"/>
    <property type="evidence" value="ECO:0007669"/>
    <property type="project" value="UniProtKB-SubCell"/>
</dbReference>
<dbReference type="GO" id="GO:0043231">
    <property type="term" value="C:intracellular membrane-bounded organelle"/>
    <property type="evidence" value="ECO:0000318"/>
    <property type="project" value="GO_Central"/>
</dbReference>
<dbReference type="GO" id="GO:0030061">
    <property type="term" value="C:mitochondrial crista"/>
    <property type="evidence" value="ECO:0000314"/>
    <property type="project" value="RGD"/>
</dbReference>
<dbReference type="GO" id="GO:0005743">
    <property type="term" value="C:mitochondrial inner membrane"/>
    <property type="evidence" value="ECO:0000266"/>
    <property type="project" value="RGD"/>
</dbReference>
<dbReference type="GO" id="GO:0005758">
    <property type="term" value="C:mitochondrial intermembrane space"/>
    <property type="evidence" value="ECO:0000266"/>
    <property type="project" value="RGD"/>
</dbReference>
<dbReference type="GO" id="GO:0003854">
    <property type="term" value="F:3-beta-hydroxy-Delta5-steroid dehydrogenase (NAD+) activity"/>
    <property type="evidence" value="ECO:0000314"/>
    <property type="project" value="UniProtKB"/>
</dbReference>
<dbReference type="GO" id="GO:0000253">
    <property type="term" value="F:3-beta-hydroxysteroid 3-dehydrogenase (NADP+) activity"/>
    <property type="evidence" value="ECO:0007669"/>
    <property type="project" value="UniProtKB-EC"/>
</dbReference>
<dbReference type="GO" id="GO:0047024">
    <property type="term" value="F:5-alpha-androstane-3-beta,17-beta-diol dehydrogenase (NADP+) activity"/>
    <property type="evidence" value="ECO:0007669"/>
    <property type="project" value="UniProtKB-EC"/>
</dbReference>
<dbReference type="GO" id="GO:0051287">
    <property type="term" value="F:NAD binding"/>
    <property type="evidence" value="ECO:0000314"/>
    <property type="project" value="RGD"/>
</dbReference>
<dbReference type="GO" id="GO:0016616">
    <property type="term" value="F:oxidoreductase activity, acting on the CH-OH group of donors, NAD or NADP as acceptor"/>
    <property type="evidence" value="ECO:0000318"/>
    <property type="project" value="GO_Central"/>
</dbReference>
<dbReference type="GO" id="GO:0005496">
    <property type="term" value="F:steroid binding"/>
    <property type="evidence" value="ECO:0000353"/>
    <property type="project" value="RGD"/>
</dbReference>
<dbReference type="GO" id="GO:0004769">
    <property type="term" value="F:steroid Delta-isomerase activity"/>
    <property type="evidence" value="ECO:0000314"/>
    <property type="project" value="UniProtKB"/>
</dbReference>
<dbReference type="GO" id="GO:0030325">
    <property type="term" value="P:adrenal gland development"/>
    <property type="evidence" value="ECO:0000270"/>
    <property type="project" value="RGD"/>
</dbReference>
<dbReference type="GO" id="GO:0006702">
    <property type="term" value="P:androgen biosynthetic process"/>
    <property type="evidence" value="ECO:0000266"/>
    <property type="project" value="RGD"/>
</dbReference>
<dbReference type="GO" id="GO:0018879">
    <property type="term" value="P:biphenyl metabolic process"/>
    <property type="evidence" value="ECO:0000270"/>
    <property type="project" value="RGD"/>
</dbReference>
<dbReference type="GO" id="GO:0008207">
    <property type="term" value="P:C21-steroid hormone metabolic process"/>
    <property type="evidence" value="ECO:0000314"/>
    <property type="project" value="RGD"/>
</dbReference>
<dbReference type="GO" id="GO:0071236">
    <property type="term" value="P:cellular response to antibiotic"/>
    <property type="evidence" value="ECO:0000270"/>
    <property type="project" value="RGD"/>
</dbReference>
<dbReference type="GO" id="GO:0071320">
    <property type="term" value="P:cellular response to cAMP"/>
    <property type="evidence" value="ECO:0000270"/>
    <property type="project" value="RGD"/>
</dbReference>
<dbReference type="GO" id="GO:0071549">
    <property type="term" value="P:cellular response to dexamethasone stimulus"/>
    <property type="evidence" value="ECO:0000270"/>
    <property type="project" value="RGD"/>
</dbReference>
<dbReference type="GO" id="GO:0044344">
    <property type="term" value="P:cellular response to fibroblast growth factor stimulus"/>
    <property type="evidence" value="ECO:0000270"/>
    <property type="project" value="RGD"/>
</dbReference>
<dbReference type="GO" id="GO:0071372">
    <property type="term" value="P:cellular response to follicle-stimulating hormone stimulus"/>
    <property type="evidence" value="ECO:0000270"/>
    <property type="project" value="RGD"/>
</dbReference>
<dbReference type="GO" id="GO:0071333">
    <property type="term" value="P:cellular response to glucose stimulus"/>
    <property type="evidence" value="ECO:0000270"/>
    <property type="project" value="RGD"/>
</dbReference>
<dbReference type="GO" id="GO:0071371">
    <property type="term" value="P:cellular response to gonadotropin stimulus"/>
    <property type="evidence" value="ECO:0000270"/>
    <property type="project" value="RGD"/>
</dbReference>
<dbReference type="GO" id="GO:0070301">
    <property type="term" value="P:cellular response to hydrogen peroxide"/>
    <property type="evidence" value="ECO:0000270"/>
    <property type="project" value="RGD"/>
</dbReference>
<dbReference type="GO" id="GO:0032869">
    <property type="term" value="P:cellular response to insulin stimulus"/>
    <property type="evidence" value="ECO:0000270"/>
    <property type="project" value="RGD"/>
</dbReference>
<dbReference type="GO" id="GO:0071373">
    <property type="term" value="P:cellular response to luteinizing hormone stimulus"/>
    <property type="evidence" value="ECO:0000270"/>
    <property type="project" value="RGD"/>
</dbReference>
<dbReference type="GO" id="GO:0071288">
    <property type="term" value="P:cellular response to mercury ion"/>
    <property type="evidence" value="ECO:0000270"/>
    <property type="project" value="RGD"/>
</dbReference>
<dbReference type="GO" id="GO:0071406">
    <property type="term" value="P:cellular response to methylmercury"/>
    <property type="evidence" value="ECO:0000270"/>
    <property type="project" value="RGD"/>
</dbReference>
<dbReference type="GO" id="GO:0071560">
    <property type="term" value="P:cellular response to transforming growth factor beta stimulus"/>
    <property type="evidence" value="ECO:0000270"/>
    <property type="project" value="RGD"/>
</dbReference>
<dbReference type="GO" id="GO:0018894">
    <property type="term" value="P:dibenzo-p-dioxin metabolic process"/>
    <property type="evidence" value="ECO:0000270"/>
    <property type="project" value="RGD"/>
</dbReference>
<dbReference type="GO" id="GO:0016101">
    <property type="term" value="P:diterpenoid metabolic process"/>
    <property type="evidence" value="ECO:0000270"/>
    <property type="project" value="RGD"/>
</dbReference>
<dbReference type="GO" id="GO:0008585">
    <property type="term" value="P:female gonad development"/>
    <property type="evidence" value="ECO:0000270"/>
    <property type="project" value="RGD"/>
</dbReference>
<dbReference type="GO" id="GO:0030851">
    <property type="term" value="P:granulocyte differentiation"/>
    <property type="evidence" value="ECO:0000270"/>
    <property type="project" value="RGD"/>
</dbReference>
<dbReference type="GO" id="GO:0021766">
    <property type="term" value="P:hippocampus development"/>
    <property type="evidence" value="ECO:0000270"/>
    <property type="project" value="RGD"/>
</dbReference>
<dbReference type="GO" id="GO:0033327">
    <property type="term" value="P:Leydig cell differentiation"/>
    <property type="evidence" value="ECO:0000270"/>
    <property type="project" value="RGD"/>
</dbReference>
<dbReference type="GO" id="GO:0008584">
    <property type="term" value="P:male gonad development"/>
    <property type="evidence" value="ECO:0000270"/>
    <property type="project" value="RGD"/>
</dbReference>
<dbReference type="GO" id="GO:0060135">
    <property type="term" value="P:maternal process involved in female pregnancy"/>
    <property type="evidence" value="ECO:0000270"/>
    <property type="project" value="RGD"/>
</dbReference>
<dbReference type="GO" id="GO:0006082">
    <property type="term" value="P:organic acid metabolic process"/>
    <property type="evidence" value="ECO:0000270"/>
    <property type="project" value="RGD"/>
</dbReference>
<dbReference type="GO" id="GO:0018958">
    <property type="term" value="P:phenol-containing compound metabolic process"/>
    <property type="evidence" value="ECO:0000270"/>
    <property type="project" value="RGD"/>
</dbReference>
<dbReference type="GO" id="GO:0046470">
    <property type="term" value="P:phosphatidylcholine metabolic process"/>
    <property type="evidence" value="ECO:0000270"/>
    <property type="project" value="RGD"/>
</dbReference>
<dbReference type="GO" id="GO:0006701">
    <property type="term" value="P:progesterone biosynthetic process"/>
    <property type="evidence" value="ECO:0000314"/>
    <property type="project" value="RGD"/>
</dbReference>
<dbReference type="GO" id="GO:0014823">
    <property type="term" value="P:response to activity"/>
    <property type="evidence" value="ECO:0000270"/>
    <property type="project" value="RGD"/>
</dbReference>
<dbReference type="GO" id="GO:0043279">
    <property type="term" value="P:response to alkaloid"/>
    <property type="evidence" value="ECO:0000270"/>
    <property type="project" value="RGD"/>
</dbReference>
<dbReference type="GO" id="GO:0046685">
    <property type="term" value="P:response to arsenic-containing substance"/>
    <property type="evidence" value="ECO:0000270"/>
    <property type="project" value="RGD"/>
</dbReference>
<dbReference type="GO" id="GO:0046686">
    <property type="term" value="P:response to cadmium ion"/>
    <property type="evidence" value="ECO:0000270"/>
    <property type="project" value="RGD"/>
</dbReference>
<dbReference type="GO" id="GO:0051592">
    <property type="term" value="P:response to calcium ion"/>
    <property type="evidence" value="ECO:0000270"/>
    <property type="project" value="RGD"/>
</dbReference>
<dbReference type="GO" id="GO:0051412">
    <property type="term" value="P:response to corticosterone"/>
    <property type="evidence" value="ECO:0000270"/>
    <property type="project" value="RGD"/>
</dbReference>
<dbReference type="GO" id="GO:0032355">
    <property type="term" value="P:response to estradiol"/>
    <property type="evidence" value="ECO:0000270"/>
    <property type="project" value="RGD"/>
</dbReference>
<dbReference type="GO" id="GO:0045471">
    <property type="term" value="P:response to ethanol"/>
    <property type="evidence" value="ECO:0000270"/>
    <property type="project" value="RGD"/>
</dbReference>
<dbReference type="GO" id="GO:0070542">
    <property type="term" value="P:response to fatty acid"/>
    <property type="evidence" value="ECO:0000270"/>
    <property type="project" value="RGD"/>
</dbReference>
<dbReference type="GO" id="GO:0060992">
    <property type="term" value="P:response to fungicide"/>
    <property type="evidence" value="ECO:0000270"/>
    <property type="project" value="RGD"/>
</dbReference>
<dbReference type="GO" id="GO:0009635">
    <property type="term" value="P:response to herbicide"/>
    <property type="evidence" value="ECO:0000270"/>
    <property type="project" value="RGD"/>
</dbReference>
<dbReference type="GO" id="GO:0033591">
    <property type="term" value="P:response to L-ascorbic acid"/>
    <property type="evidence" value="ECO:0000270"/>
    <property type="project" value="RGD"/>
</dbReference>
<dbReference type="GO" id="GO:0010288">
    <property type="term" value="P:response to lead ion"/>
    <property type="evidence" value="ECO:0000270"/>
    <property type="project" value="RGD"/>
</dbReference>
<dbReference type="GO" id="GO:0010038">
    <property type="term" value="P:response to metal ion"/>
    <property type="evidence" value="ECO:0000270"/>
    <property type="project" value="RGD"/>
</dbReference>
<dbReference type="GO" id="GO:0031667">
    <property type="term" value="P:response to nutrient levels"/>
    <property type="evidence" value="ECO:0000270"/>
    <property type="project" value="RGD"/>
</dbReference>
<dbReference type="GO" id="GO:0033197">
    <property type="term" value="P:response to vitamin E"/>
    <property type="evidence" value="ECO:0000270"/>
    <property type="project" value="RGD"/>
</dbReference>
<dbReference type="GO" id="GO:0009410">
    <property type="term" value="P:response to xenobiotic stimulus"/>
    <property type="evidence" value="ECO:0000270"/>
    <property type="project" value="RGD"/>
</dbReference>
<dbReference type="GO" id="GO:0006694">
    <property type="term" value="P:steroid biosynthetic process"/>
    <property type="evidence" value="ECO:0000318"/>
    <property type="project" value="GO_Central"/>
</dbReference>
<dbReference type="GO" id="GO:0008202">
    <property type="term" value="P:steroid metabolic process"/>
    <property type="evidence" value="ECO:0000314"/>
    <property type="project" value="RGD"/>
</dbReference>
<dbReference type="GO" id="GO:0061370">
    <property type="term" value="P:testosterone biosynthetic process"/>
    <property type="evidence" value="ECO:0000270"/>
    <property type="project" value="RGD"/>
</dbReference>
<dbReference type="GO" id="GO:0018970">
    <property type="term" value="P:toluene metabolic process"/>
    <property type="evidence" value="ECO:0000270"/>
    <property type="project" value="RGD"/>
</dbReference>
<dbReference type="FunFam" id="3.40.50.720:FF:000220">
    <property type="entry name" value="3 beta-hydroxysteroid dehydrogenase/Delta 5--&gt;4-isomerase type 1"/>
    <property type="match status" value="1"/>
</dbReference>
<dbReference type="Gene3D" id="3.40.50.720">
    <property type="entry name" value="NAD(P)-binding Rossmann-like Domain"/>
    <property type="match status" value="1"/>
</dbReference>
<dbReference type="InterPro" id="IPR002225">
    <property type="entry name" value="3Beta_OHSteriod_DH/Estase"/>
</dbReference>
<dbReference type="InterPro" id="IPR050177">
    <property type="entry name" value="Lipid_A_modif_metabolic_enz"/>
</dbReference>
<dbReference type="InterPro" id="IPR036291">
    <property type="entry name" value="NAD(P)-bd_dom_sf"/>
</dbReference>
<dbReference type="PANTHER" id="PTHR43245">
    <property type="entry name" value="BIFUNCTIONAL POLYMYXIN RESISTANCE PROTEIN ARNA"/>
    <property type="match status" value="1"/>
</dbReference>
<dbReference type="PANTHER" id="PTHR43245:SF51">
    <property type="entry name" value="SHORT CHAIN DEHYDROGENASE_REDUCTASE FAMILY 42E, MEMBER 2"/>
    <property type="match status" value="1"/>
</dbReference>
<dbReference type="Pfam" id="PF01073">
    <property type="entry name" value="3Beta_HSD"/>
    <property type="match status" value="1"/>
</dbReference>
<dbReference type="SUPFAM" id="SSF51735">
    <property type="entry name" value="NAD(P)-binding Rossmann-fold domains"/>
    <property type="match status" value="1"/>
</dbReference>
<accession>P22071</accession>
<accession>Q19P43</accession>
<protein>
    <recommendedName>
        <fullName>3 beta-hydroxysteroid dehydrogenase/Delta 5--&gt;4-isomerase type 1</fullName>
    </recommendedName>
    <alternativeName>
        <fullName evidence="6">3 beta-hydroxysteroid dehydrogenase/Delta 5--&gt;4-isomerase type I</fullName>
        <shortName>3-beta-HSD I</shortName>
    </alternativeName>
    <alternativeName>
        <fullName evidence="1">3-beta-hydroxy-5-ene steroid dehydrogenase</fullName>
    </alternativeName>
    <alternativeName>
        <fullName evidence="8 9">3-beta-hydroxy-Delta(5)-steroid dehydrogenase</fullName>
        <ecNumber evidence="4 5">1.1.1.145</ecNumber>
    </alternativeName>
    <alternativeName>
        <fullName evidence="8">3-beta-hydroxysteroid 3-dehydrogenase</fullName>
        <ecNumber evidence="4">1.1.1.270</ecNumber>
    </alternativeName>
    <alternativeName>
        <fullName>Delta-5-3-ketosteroid isomerase</fullName>
    </alternativeName>
    <alternativeName>
        <fullName evidence="6">Dihydrotestosterone oxidoreductase</fullName>
        <ecNumber evidence="4">1.1.1.210</ecNumber>
    </alternativeName>
    <alternativeName>
        <fullName evidence="8 9">Steroid Delta-isomerase</fullName>
        <ecNumber evidence="4 5">5.3.3.1</ecNumber>
    </alternativeName>
</protein>
<comment type="function">
    <text evidence="4 5 8">A bifunctional enzyme responsible for the oxidation and isomerization of 3beta-hydroxy-Delta(5)-steroid precursors to 3-oxo-Delta(4)-steroids, an essential step in steroid hormone biosynthesis. Specifically catalyzes the conversion of pregnenolone to progesterone, dehydroepiandrosterone (DHEA) to 4-androstenedione, and androstenediol to testosterone (PubMed:1537836, PubMed:1985917). Additionally, catalyzes the interconversion between 3beta-hydroxy and 3-oxo-5alpha-androstane steroids controlling the bioavalability of the active forms. Specifically converts dihydrotestosterone to its inactive form 5alpha-androstanediol, that does not bind androgen receptor/AR. Also converts androstanedione, a precursor of testosterone and estrone, to epiandrosterone (PubMed:1537836). Expected to use NAD(+) as preferred electron donor for the 3beta-hydroxy-steroid dehydrogenase activity and NADPH for the 3-ketosteroid reductase activity (Probable).</text>
</comment>
<comment type="catalytic activity">
    <reaction evidence="4">
        <text>a 3beta-hydroxy-Delta(5)-steroid + NAD(+) = a 3-oxo-Delta(5)-steroid + NADH + H(+)</text>
        <dbReference type="Rhea" id="RHEA:24076"/>
        <dbReference type="ChEBI" id="CHEBI:1722"/>
        <dbReference type="ChEBI" id="CHEBI:15378"/>
        <dbReference type="ChEBI" id="CHEBI:47907"/>
        <dbReference type="ChEBI" id="CHEBI:57540"/>
        <dbReference type="ChEBI" id="CHEBI:57945"/>
        <dbReference type="EC" id="1.1.1.145"/>
    </reaction>
</comment>
<comment type="catalytic activity">
    <reaction evidence="4 5">
        <text>pregnenolone + NAD(+) = pregn-5-ene-3,20-dione + NADH + H(+)</text>
        <dbReference type="Rhea" id="RHEA:43924"/>
        <dbReference type="ChEBI" id="CHEBI:15378"/>
        <dbReference type="ChEBI" id="CHEBI:16581"/>
        <dbReference type="ChEBI" id="CHEBI:57540"/>
        <dbReference type="ChEBI" id="CHEBI:57945"/>
        <dbReference type="ChEBI" id="CHEBI:63837"/>
    </reaction>
</comment>
<comment type="catalytic activity">
    <reaction evidence="4">
        <text>3beta-hydroxyandrost-5-en-17-one + NAD(+) = androst-5-ene-3,17-dione + NADH + H(+)</text>
        <dbReference type="Rhea" id="RHEA:43932"/>
        <dbReference type="ChEBI" id="CHEBI:15378"/>
        <dbReference type="ChEBI" id="CHEBI:28689"/>
        <dbReference type="ChEBI" id="CHEBI:57540"/>
        <dbReference type="ChEBI" id="CHEBI:57945"/>
        <dbReference type="ChEBI" id="CHEBI:83865"/>
        <dbReference type="EC" id="1.1.1.145"/>
    </reaction>
</comment>
<comment type="catalytic activity">
    <reaction evidence="4 5">
        <text>androst-5-en-3beta,17beta-diol + NAD(+) = 17beta-hydroxy-androst-5-en-3-one + NADH + H(+)</text>
        <dbReference type="Rhea" id="RHEA:56932"/>
        <dbReference type="ChEBI" id="CHEBI:2710"/>
        <dbReference type="ChEBI" id="CHEBI:15378"/>
        <dbReference type="ChEBI" id="CHEBI:57540"/>
        <dbReference type="ChEBI" id="CHEBI:57945"/>
        <dbReference type="ChEBI" id="CHEBI:141179"/>
    </reaction>
</comment>
<comment type="catalytic activity">
    <reaction evidence="4">
        <text>a 3beta-hydroxysteroid + NADP(+) = a 3-oxosteroid + NADPH + H(+)</text>
        <dbReference type="Rhea" id="RHEA:34787"/>
        <dbReference type="ChEBI" id="CHEBI:15378"/>
        <dbReference type="ChEBI" id="CHEBI:36836"/>
        <dbReference type="ChEBI" id="CHEBI:47788"/>
        <dbReference type="ChEBI" id="CHEBI:57783"/>
        <dbReference type="ChEBI" id="CHEBI:58349"/>
        <dbReference type="EC" id="1.1.1.270"/>
    </reaction>
</comment>
<comment type="catalytic activity">
    <reaction evidence="4">
        <text>5alpha-androstane-3beta,17beta-diol + NADP(+) = 17beta-hydroxy-5alpha-androstan-3-one + NADPH + H(+)</text>
        <dbReference type="Rhea" id="RHEA:16297"/>
        <dbReference type="ChEBI" id="CHEBI:15378"/>
        <dbReference type="ChEBI" id="CHEBI:16330"/>
        <dbReference type="ChEBI" id="CHEBI:18329"/>
        <dbReference type="ChEBI" id="CHEBI:57783"/>
        <dbReference type="ChEBI" id="CHEBI:58349"/>
        <dbReference type="EC" id="1.1.1.210"/>
    </reaction>
</comment>
<comment type="catalytic activity">
    <reaction evidence="4">
        <text>3beta-hydroxy-5alpha-androstan-17-one + NADP(+) = 5alpha-androstan-3,17-dione + NADPH + H(+)</text>
        <dbReference type="Rhea" id="RHEA:56916"/>
        <dbReference type="ChEBI" id="CHEBI:15378"/>
        <dbReference type="ChEBI" id="CHEBI:15994"/>
        <dbReference type="ChEBI" id="CHEBI:57783"/>
        <dbReference type="ChEBI" id="CHEBI:58349"/>
        <dbReference type="ChEBI" id="CHEBI:541975"/>
    </reaction>
</comment>
<comment type="catalytic activity">
    <reaction evidence="4">
        <text>a 3-oxo-Delta(5)-steroid = a 3-oxo-Delta(4)-steroid</text>
        <dbReference type="Rhea" id="RHEA:14709"/>
        <dbReference type="ChEBI" id="CHEBI:47907"/>
        <dbReference type="ChEBI" id="CHEBI:47909"/>
        <dbReference type="EC" id="5.3.3.1"/>
    </reaction>
</comment>
<comment type="catalytic activity">
    <reaction evidence="4">
        <text>pregn-5-ene-3,20-dione = progesterone</text>
        <dbReference type="Rhea" id="RHEA:43928"/>
        <dbReference type="ChEBI" id="CHEBI:17026"/>
        <dbReference type="ChEBI" id="CHEBI:63837"/>
    </reaction>
</comment>
<comment type="catalytic activity">
    <reaction evidence="4">
        <text>androst-5-ene-3,17-dione = androst-4-ene-3,17-dione</text>
        <dbReference type="Rhea" id="RHEA:43936"/>
        <dbReference type="ChEBI" id="CHEBI:16422"/>
        <dbReference type="ChEBI" id="CHEBI:83865"/>
    </reaction>
</comment>
<comment type="catalytic activity">
    <reaction evidence="4">
        <text>17beta-hydroxy-androst-5-en-3-one = testosterone</text>
        <dbReference type="Rhea" id="RHEA:56936"/>
        <dbReference type="ChEBI" id="CHEBI:17347"/>
        <dbReference type="ChEBI" id="CHEBI:141179"/>
    </reaction>
</comment>
<comment type="catalytic activity">
    <reaction evidence="1">
        <text>5alpha-androstane-3beta,17beta-diol + NAD(+) = 17beta-hydroxy-5alpha-androstan-3-one + NADH + H(+)</text>
        <dbReference type="Rhea" id="RHEA:42184"/>
        <dbReference type="ChEBI" id="CHEBI:15378"/>
        <dbReference type="ChEBI" id="CHEBI:16330"/>
        <dbReference type="ChEBI" id="CHEBI:18329"/>
        <dbReference type="ChEBI" id="CHEBI:57540"/>
        <dbReference type="ChEBI" id="CHEBI:57945"/>
    </reaction>
</comment>
<comment type="biophysicochemical properties">
    <kinetics>
        <KM evidence="4">1.18 uM for dihydrotestosterone (in the presence of NADPH)</KM>
        <KM evidence="4">5.05 uM for dihydrotestosterone (in the presence of NADH)</KM>
        <text evidence="4">Vmax for dihydrotestosterone reduction is 15-fold higher in the presence of NADH than in the presence of NADPH.</text>
    </kinetics>
</comment>
<comment type="pathway">
    <text evidence="4">Steroid hormone biosynthesis.</text>
</comment>
<comment type="pathway">
    <text evidence="4">Steroid metabolism.</text>
</comment>
<comment type="subcellular location">
    <subcellularLocation>
        <location>Endoplasmic reticulum membrane</location>
        <topology>Single-pass membrane protein</topology>
    </subcellularLocation>
    <subcellularLocation>
        <location>Mitochondrion membrane</location>
        <topology>Single-pass membrane protein</topology>
    </subcellularLocation>
</comment>
<comment type="tissue specificity">
    <text evidence="5">Adrenal glands, kidney, testes and ovaries.</text>
</comment>
<comment type="similarity">
    <text evidence="7">Belongs to the 3-beta-HSD family.</text>
</comment>
<feature type="chain" id="PRO_0000087787" description="3 beta-hydroxysteroid dehydrogenase/Delta 5--&gt;4-isomerase type 1">
    <location>
        <begin position="1"/>
        <end position="373"/>
    </location>
</feature>
<feature type="transmembrane region" description="Helical" evidence="3">
    <location>
        <begin position="288"/>
        <end position="308"/>
    </location>
</feature>
<feature type="active site" description="Proton donor" evidence="2">
    <location>
        <position position="159"/>
    </location>
</feature>
<feature type="binding site" evidence="2">
    <location>
        <begin position="10"/>
        <end position="15"/>
    </location>
    <ligand>
        <name>NADP(+)</name>
        <dbReference type="ChEBI" id="CHEBI:58349"/>
    </ligand>
</feature>
<feature type="binding site" evidence="2">
    <location>
        <position position="155"/>
    </location>
    <ligand>
        <name>NADP(+)</name>
        <dbReference type="ChEBI" id="CHEBI:58349"/>
    </ligand>
</feature>
<feature type="binding site" evidence="2">
    <location>
        <position position="159"/>
    </location>
    <ligand>
        <name>NADP(+)</name>
        <dbReference type="ChEBI" id="CHEBI:58349"/>
    </ligand>
</feature>
<sequence length="373" mass="42037">MPGWSCLVTGAGGFVGQRIIRMLVQEKELQEVRALDKVFRPETKEEFSKLQTKAKVTMLEGDILDAQYLRRACQGISVVIHTAAVIDVSHVLPRQTILDVNLKGTQNILEACVEASVPAFIYCSTVDVAGPNSYKKIILNGHEEEHHESTWSDAYPYSKRMAEKAVLAANGSILKNGGTLHTCALRPMYIYGERSPFLSVMILAALKNKGILNVTGKFSIANPVYVGNVAWAHILAARGLRDPKKSQNVQGQFYYISDDTPHQSYDDLNCTLSKEWGLRLDSSWSLPLPLLYWLAFLLETVSFLLRPFYNYRPPFNCHLVTLSNSKFTFSYKKAQRDLGYVPLVSWEEAKQKTSEWIGTLVEQHRETLDTKSQ</sequence>
<name>3BHS1_RAT</name>
<gene>
    <name evidence="10" type="primary">Hsd3b1</name>
</gene>
<reference key="1">
    <citation type="journal article" date="1991" name="J. Biol. Chem.">
        <title>Characterization of rat 3 beta-hydroxysteroid dehydrogenase/delta 5-delta 4 isomerase cDNAs and differential tissue-specific expression of the corresponding mRNAs in steroidogenic and peripheral tissues.</title>
        <authorList>
            <person name="Zhao H.-F."/>
            <person name="Labrie C."/>
            <person name="Simard J."/>
            <person name="de Launoit Y."/>
            <person name="Trudel C."/>
            <person name="Martel C."/>
            <person name="Rheaume E."/>
            <person name="Dupont E."/>
            <person name="Luu-The V."/>
            <person name="Pelletier G."/>
            <person name="Labrie F."/>
        </authorList>
    </citation>
    <scope>NUCLEOTIDE SEQUENCE [MRNA]</scope>
    <scope>FUNCTION</scope>
    <scope>TISSUE SPECIFICITY</scope>
    <scope>CATALYTIC ACTIVITY</scope>
    <scope>SUBSTRATE SPECIFICITY</scope>
</reference>
<reference key="2">
    <citation type="journal article" date="1991" name="Mol. Cell. Endocrinol.">
        <title>3 beta-hydroxysteroid dehydrogenase/delta 5--&gt;4-isomerase expression in rat and characterization of the testis isoform.</title>
        <authorList>
            <person name="Lorence M.C."/>
            <person name="Naville D."/>
            <person name="Graham-Lorence S.E."/>
            <person name="Mack S.O."/>
            <person name="Murry B.A."/>
            <person name="Trant J.M."/>
            <person name="Mason J.I."/>
        </authorList>
    </citation>
    <scope>NUCLEOTIDE SEQUENCE [MRNA]</scope>
    <source>
        <tissue>Testis</tissue>
    </source>
</reference>
<reference key="3">
    <citation type="journal article" date="2004" name="Genome Res.">
        <title>The status, quality, and expansion of the NIH full-length cDNA project: the Mammalian Gene Collection (MGC).</title>
        <authorList>
            <consortium name="The MGC Project Team"/>
        </authorList>
    </citation>
    <scope>NUCLEOTIDE SEQUENCE [LARGE SCALE MRNA]</scope>
    <source>
        <tissue>Ovary</tissue>
    </source>
</reference>
<reference key="4">
    <citation type="submission" date="2006-04" db="EMBL/GenBank/DDBJ databases">
        <authorList>
            <person name="Si J.L."/>
            <person name="Li J."/>
            <person name="Xu X.Q."/>
        </authorList>
    </citation>
    <scope>NUCLEOTIDE SEQUENCE [MRNA] OF 227-358</scope>
    <source>
        <strain>Wistar</strain>
    </source>
</reference>
<reference key="5">
    <citation type="journal article" date="1992" name="J. Biol. Chem.">
        <title>Expression of liver-specific member of the 3 beta-hydroxysteroid dehydrogenase family, an isoform possessing an almost exclusive 3-ketosteroid reductase activity.</title>
        <authorList>
            <person name="de Launoit Y."/>
            <person name="Zhao H.F."/>
            <person name="Belanger A."/>
            <person name="Labrie F."/>
            <person name="Simard J."/>
        </authorList>
    </citation>
    <scope>FUNCTION</scope>
    <scope>CATALYTIC ACTIVITY</scope>
    <scope>BIOPHYSICOCHEMICAL PROPERTIES</scope>
    <scope>SUBSTRATE SPECIFICITY</scope>
    <scope>PATHWAY</scope>
</reference>
<proteinExistence type="evidence at protein level"/>
<keyword id="KW-0256">Endoplasmic reticulum</keyword>
<keyword id="KW-0413">Isomerase</keyword>
<keyword id="KW-0443">Lipid metabolism</keyword>
<keyword id="KW-0472">Membrane</keyword>
<keyword id="KW-0496">Mitochondrion</keyword>
<keyword id="KW-0511">Multifunctional enzyme</keyword>
<keyword id="KW-0520">NAD</keyword>
<keyword id="KW-0521">NADP</keyword>
<keyword id="KW-0560">Oxidoreductase</keyword>
<keyword id="KW-1185">Reference proteome</keyword>
<keyword id="KW-0753">Steroid metabolism</keyword>
<keyword id="KW-0755">Steroidogenesis</keyword>
<keyword id="KW-0812">Transmembrane</keyword>
<keyword id="KW-1133">Transmembrane helix</keyword>
<organism>
    <name type="scientific">Rattus norvegicus</name>
    <name type="common">Rat</name>
    <dbReference type="NCBI Taxonomy" id="10116"/>
    <lineage>
        <taxon>Eukaryota</taxon>
        <taxon>Metazoa</taxon>
        <taxon>Chordata</taxon>
        <taxon>Craniata</taxon>
        <taxon>Vertebrata</taxon>
        <taxon>Euteleostomi</taxon>
        <taxon>Mammalia</taxon>
        <taxon>Eutheria</taxon>
        <taxon>Euarchontoglires</taxon>
        <taxon>Glires</taxon>
        <taxon>Rodentia</taxon>
        <taxon>Myomorpha</taxon>
        <taxon>Muroidea</taxon>
        <taxon>Muridae</taxon>
        <taxon>Murinae</taxon>
        <taxon>Rattus</taxon>
    </lineage>
</organism>
<evidence type="ECO:0000250" key="1">
    <source>
        <dbReference type="UniProtKB" id="P14060"/>
    </source>
</evidence>
<evidence type="ECO:0000250" key="2">
    <source>
        <dbReference type="UniProtKB" id="Q12068"/>
    </source>
</evidence>
<evidence type="ECO:0000255" key="3"/>
<evidence type="ECO:0000269" key="4">
    <source>
    </source>
</evidence>
<evidence type="ECO:0000269" key="5">
    <source>
    </source>
</evidence>
<evidence type="ECO:0000303" key="6">
    <source>
    </source>
</evidence>
<evidence type="ECO:0000305" key="7"/>
<evidence type="ECO:0000305" key="8">
    <source>
    </source>
</evidence>
<evidence type="ECO:0000305" key="9">
    <source>
    </source>
</evidence>
<evidence type="ECO:0000312" key="10">
    <source>
        <dbReference type="RGD" id="1308676"/>
    </source>
</evidence>